<accession>Q1GTD8</accession>
<name>GLMU_SPHAL</name>
<reference key="1">
    <citation type="journal article" date="2009" name="Proc. Natl. Acad. Sci. U.S.A.">
        <title>The genomic basis of trophic strategy in marine bacteria.</title>
        <authorList>
            <person name="Lauro F.M."/>
            <person name="McDougald D."/>
            <person name="Thomas T."/>
            <person name="Williams T.J."/>
            <person name="Egan S."/>
            <person name="Rice S."/>
            <person name="DeMaere M.Z."/>
            <person name="Ting L."/>
            <person name="Ertan H."/>
            <person name="Johnson J."/>
            <person name="Ferriera S."/>
            <person name="Lapidus A."/>
            <person name="Anderson I."/>
            <person name="Kyrpides N."/>
            <person name="Munk A.C."/>
            <person name="Detter C."/>
            <person name="Han C.S."/>
            <person name="Brown M.V."/>
            <person name="Robb F.T."/>
            <person name="Kjelleberg S."/>
            <person name="Cavicchioli R."/>
        </authorList>
    </citation>
    <scope>NUCLEOTIDE SEQUENCE [LARGE SCALE GENOMIC DNA]</scope>
    <source>
        <strain>DSM 13593 / LMG 18877 / RB2256</strain>
    </source>
</reference>
<dbReference type="EC" id="2.7.7.23" evidence="1"/>
<dbReference type="EC" id="2.3.1.157" evidence="1"/>
<dbReference type="EMBL" id="CP000356">
    <property type="protein sequence ID" value="ABF53084.1"/>
    <property type="status" value="ALT_INIT"/>
    <property type="molecule type" value="Genomic_DNA"/>
</dbReference>
<dbReference type="RefSeq" id="WP_011541664.1">
    <property type="nucleotide sequence ID" value="NC_008048.1"/>
</dbReference>
<dbReference type="SMR" id="Q1GTD8"/>
<dbReference type="STRING" id="317655.Sala_1370"/>
<dbReference type="KEGG" id="sal:Sala_1370"/>
<dbReference type="eggNOG" id="COG1207">
    <property type="taxonomic scope" value="Bacteria"/>
</dbReference>
<dbReference type="HOGENOM" id="CLU_029499_15_2_5"/>
<dbReference type="OrthoDB" id="9775031at2"/>
<dbReference type="UniPathway" id="UPA00113">
    <property type="reaction ID" value="UER00532"/>
</dbReference>
<dbReference type="UniPathway" id="UPA00113">
    <property type="reaction ID" value="UER00533"/>
</dbReference>
<dbReference type="UniPathway" id="UPA00973"/>
<dbReference type="Proteomes" id="UP000006578">
    <property type="component" value="Chromosome"/>
</dbReference>
<dbReference type="GO" id="GO:0005737">
    <property type="term" value="C:cytoplasm"/>
    <property type="evidence" value="ECO:0007669"/>
    <property type="project" value="UniProtKB-SubCell"/>
</dbReference>
<dbReference type="GO" id="GO:0016020">
    <property type="term" value="C:membrane"/>
    <property type="evidence" value="ECO:0007669"/>
    <property type="project" value="GOC"/>
</dbReference>
<dbReference type="GO" id="GO:0019134">
    <property type="term" value="F:glucosamine-1-phosphate N-acetyltransferase activity"/>
    <property type="evidence" value="ECO:0007669"/>
    <property type="project" value="UniProtKB-UniRule"/>
</dbReference>
<dbReference type="GO" id="GO:0000287">
    <property type="term" value="F:magnesium ion binding"/>
    <property type="evidence" value="ECO:0007669"/>
    <property type="project" value="UniProtKB-UniRule"/>
</dbReference>
<dbReference type="GO" id="GO:0003977">
    <property type="term" value="F:UDP-N-acetylglucosamine diphosphorylase activity"/>
    <property type="evidence" value="ECO:0007669"/>
    <property type="project" value="UniProtKB-UniRule"/>
</dbReference>
<dbReference type="GO" id="GO:0000902">
    <property type="term" value="P:cell morphogenesis"/>
    <property type="evidence" value="ECO:0007669"/>
    <property type="project" value="UniProtKB-UniRule"/>
</dbReference>
<dbReference type="GO" id="GO:0071555">
    <property type="term" value="P:cell wall organization"/>
    <property type="evidence" value="ECO:0007669"/>
    <property type="project" value="UniProtKB-KW"/>
</dbReference>
<dbReference type="GO" id="GO:0009245">
    <property type="term" value="P:lipid A biosynthetic process"/>
    <property type="evidence" value="ECO:0007669"/>
    <property type="project" value="UniProtKB-UniRule"/>
</dbReference>
<dbReference type="GO" id="GO:0009252">
    <property type="term" value="P:peptidoglycan biosynthetic process"/>
    <property type="evidence" value="ECO:0007669"/>
    <property type="project" value="UniProtKB-UniRule"/>
</dbReference>
<dbReference type="GO" id="GO:0008360">
    <property type="term" value="P:regulation of cell shape"/>
    <property type="evidence" value="ECO:0007669"/>
    <property type="project" value="UniProtKB-KW"/>
</dbReference>
<dbReference type="GO" id="GO:0006048">
    <property type="term" value="P:UDP-N-acetylglucosamine biosynthetic process"/>
    <property type="evidence" value="ECO:0007669"/>
    <property type="project" value="UniProtKB-UniPathway"/>
</dbReference>
<dbReference type="CDD" id="cd02540">
    <property type="entry name" value="GT2_GlmU_N_bac"/>
    <property type="match status" value="1"/>
</dbReference>
<dbReference type="CDD" id="cd03353">
    <property type="entry name" value="LbH_GlmU_C"/>
    <property type="match status" value="1"/>
</dbReference>
<dbReference type="Gene3D" id="2.160.10.10">
    <property type="entry name" value="Hexapeptide repeat proteins"/>
    <property type="match status" value="1"/>
</dbReference>
<dbReference type="Gene3D" id="3.90.550.10">
    <property type="entry name" value="Spore Coat Polysaccharide Biosynthesis Protein SpsA, Chain A"/>
    <property type="match status" value="1"/>
</dbReference>
<dbReference type="HAMAP" id="MF_01631">
    <property type="entry name" value="GlmU"/>
    <property type="match status" value="1"/>
</dbReference>
<dbReference type="InterPro" id="IPR005882">
    <property type="entry name" value="Bifunctional_GlmU"/>
</dbReference>
<dbReference type="InterPro" id="IPR050065">
    <property type="entry name" value="GlmU-like"/>
</dbReference>
<dbReference type="InterPro" id="IPR038009">
    <property type="entry name" value="GlmU_C_LbH"/>
</dbReference>
<dbReference type="InterPro" id="IPR001451">
    <property type="entry name" value="Hexapep"/>
</dbReference>
<dbReference type="InterPro" id="IPR018357">
    <property type="entry name" value="Hexapep_transf_CS"/>
</dbReference>
<dbReference type="InterPro" id="IPR025877">
    <property type="entry name" value="MobA-like_NTP_Trfase"/>
</dbReference>
<dbReference type="InterPro" id="IPR029044">
    <property type="entry name" value="Nucleotide-diphossugar_trans"/>
</dbReference>
<dbReference type="InterPro" id="IPR011004">
    <property type="entry name" value="Trimer_LpxA-like_sf"/>
</dbReference>
<dbReference type="NCBIfam" id="TIGR01173">
    <property type="entry name" value="glmU"/>
    <property type="match status" value="1"/>
</dbReference>
<dbReference type="NCBIfam" id="NF010933">
    <property type="entry name" value="PRK14353.1"/>
    <property type="match status" value="1"/>
</dbReference>
<dbReference type="PANTHER" id="PTHR43584:SF3">
    <property type="entry name" value="BIFUNCTIONAL PROTEIN GLMU"/>
    <property type="match status" value="1"/>
</dbReference>
<dbReference type="PANTHER" id="PTHR43584">
    <property type="entry name" value="NUCLEOTIDYL TRANSFERASE"/>
    <property type="match status" value="1"/>
</dbReference>
<dbReference type="Pfam" id="PF00132">
    <property type="entry name" value="Hexapep"/>
    <property type="match status" value="2"/>
</dbReference>
<dbReference type="Pfam" id="PF12804">
    <property type="entry name" value="NTP_transf_3"/>
    <property type="match status" value="1"/>
</dbReference>
<dbReference type="SUPFAM" id="SSF53448">
    <property type="entry name" value="Nucleotide-diphospho-sugar transferases"/>
    <property type="match status" value="1"/>
</dbReference>
<dbReference type="SUPFAM" id="SSF51161">
    <property type="entry name" value="Trimeric LpxA-like enzymes"/>
    <property type="match status" value="1"/>
</dbReference>
<dbReference type="PROSITE" id="PS00101">
    <property type="entry name" value="HEXAPEP_TRANSFERASES"/>
    <property type="match status" value="1"/>
</dbReference>
<feature type="chain" id="PRO_0000263158" description="Bifunctional protein GlmU">
    <location>
        <begin position="1"/>
        <end position="451"/>
    </location>
</feature>
<feature type="region of interest" description="Pyrophosphorylase" evidence="1">
    <location>
        <begin position="1"/>
        <end position="230"/>
    </location>
</feature>
<feature type="region of interest" description="Linker" evidence="1">
    <location>
        <begin position="231"/>
        <end position="251"/>
    </location>
</feature>
<feature type="region of interest" description="N-acetyltransferase" evidence="1">
    <location>
        <begin position="252"/>
        <end position="451"/>
    </location>
</feature>
<feature type="active site" description="Proton acceptor" evidence="1">
    <location>
        <position position="347"/>
    </location>
</feature>
<feature type="binding site" evidence="1">
    <location>
        <begin position="10"/>
        <end position="13"/>
    </location>
    <ligand>
        <name>UDP-N-acetyl-alpha-D-glucosamine</name>
        <dbReference type="ChEBI" id="CHEBI:57705"/>
    </ligand>
</feature>
<feature type="binding site" evidence="1">
    <location>
        <position position="24"/>
    </location>
    <ligand>
        <name>UDP-N-acetyl-alpha-D-glucosamine</name>
        <dbReference type="ChEBI" id="CHEBI:57705"/>
    </ligand>
</feature>
<feature type="binding site" evidence="1">
    <location>
        <position position="74"/>
    </location>
    <ligand>
        <name>UDP-N-acetyl-alpha-D-glucosamine</name>
        <dbReference type="ChEBI" id="CHEBI:57705"/>
    </ligand>
</feature>
<feature type="binding site" evidence="1">
    <location>
        <begin position="79"/>
        <end position="80"/>
    </location>
    <ligand>
        <name>UDP-N-acetyl-alpha-D-glucosamine</name>
        <dbReference type="ChEBI" id="CHEBI:57705"/>
    </ligand>
</feature>
<feature type="binding site" evidence="1">
    <location>
        <begin position="102"/>
        <end position="104"/>
    </location>
    <ligand>
        <name>UDP-N-acetyl-alpha-D-glucosamine</name>
        <dbReference type="ChEBI" id="CHEBI:57705"/>
    </ligand>
</feature>
<feature type="binding site" evidence="1">
    <location>
        <position position="104"/>
    </location>
    <ligand>
        <name>Mg(2+)</name>
        <dbReference type="ChEBI" id="CHEBI:18420"/>
    </ligand>
</feature>
<feature type="binding site" evidence="1">
    <location>
        <position position="142"/>
    </location>
    <ligand>
        <name>UDP-N-acetyl-alpha-D-glucosamine</name>
        <dbReference type="ChEBI" id="CHEBI:57705"/>
    </ligand>
</feature>
<feature type="binding site" evidence="1">
    <location>
        <position position="156"/>
    </location>
    <ligand>
        <name>UDP-N-acetyl-alpha-D-glucosamine</name>
        <dbReference type="ChEBI" id="CHEBI:57705"/>
    </ligand>
</feature>
<feature type="binding site" evidence="1">
    <location>
        <position position="171"/>
    </location>
    <ligand>
        <name>UDP-N-acetyl-alpha-D-glucosamine</name>
        <dbReference type="ChEBI" id="CHEBI:57705"/>
    </ligand>
</feature>
<feature type="binding site" evidence="1">
    <location>
        <position position="228"/>
    </location>
    <ligand>
        <name>Mg(2+)</name>
        <dbReference type="ChEBI" id="CHEBI:18420"/>
    </ligand>
</feature>
<feature type="binding site" evidence="1">
    <location>
        <position position="228"/>
    </location>
    <ligand>
        <name>UDP-N-acetyl-alpha-D-glucosamine</name>
        <dbReference type="ChEBI" id="CHEBI:57705"/>
    </ligand>
</feature>
<feature type="binding site" evidence="1">
    <location>
        <position position="317"/>
    </location>
    <ligand>
        <name>UDP-N-acetyl-alpha-D-glucosamine</name>
        <dbReference type="ChEBI" id="CHEBI:57705"/>
    </ligand>
</feature>
<feature type="binding site" evidence="1">
    <location>
        <position position="335"/>
    </location>
    <ligand>
        <name>UDP-N-acetyl-alpha-D-glucosamine</name>
        <dbReference type="ChEBI" id="CHEBI:57705"/>
    </ligand>
</feature>
<feature type="binding site" evidence="1">
    <location>
        <position position="350"/>
    </location>
    <ligand>
        <name>UDP-N-acetyl-alpha-D-glucosamine</name>
        <dbReference type="ChEBI" id="CHEBI:57705"/>
    </ligand>
</feature>
<feature type="binding site" evidence="1">
    <location>
        <position position="361"/>
    </location>
    <ligand>
        <name>UDP-N-acetyl-alpha-D-glucosamine</name>
        <dbReference type="ChEBI" id="CHEBI:57705"/>
    </ligand>
</feature>
<feature type="binding site" evidence="1">
    <location>
        <position position="364"/>
    </location>
    <ligand>
        <name>acetyl-CoA</name>
        <dbReference type="ChEBI" id="CHEBI:57288"/>
    </ligand>
</feature>
<feature type="binding site" evidence="1">
    <location>
        <begin position="370"/>
        <end position="371"/>
    </location>
    <ligand>
        <name>acetyl-CoA</name>
        <dbReference type="ChEBI" id="CHEBI:57288"/>
    </ligand>
</feature>
<feature type="binding site" evidence="1">
    <location>
        <position position="389"/>
    </location>
    <ligand>
        <name>acetyl-CoA</name>
        <dbReference type="ChEBI" id="CHEBI:57288"/>
    </ligand>
</feature>
<feature type="binding site" evidence="1">
    <location>
        <position position="407"/>
    </location>
    <ligand>
        <name>acetyl-CoA</name>
        <dbReference type="ChEBI" id="CHEBI:57288"/>
    </ligand>
</feature>
<feature type="binding site" evidence="1">
    <location>
        <position position="424"/>
    </location>
    <ligand>
        <name>acetyl-CoA</name>
        <dbReference type="ChEBI" id="CHEBI:57288"/>
    </ligand>
</feature>
<protein>
    <recommendedName>
        <fullName evidence="1">Bifunctional protein GlmU</fullName>
    </recommendedName>
    <domain>
        <recommendedName>
            <fullName evidence="1">UDP-N-acetylglucosamine pyrophosphorylase</fullName>
            <ecNumber evidence="1">2.7.7.23</ecNumber>
        </recommendedName>
        <alternativeName>
            <fullName evidence="1">N-acetylglucosamine-1-phosphate uridyltransferase</fullName>
        </alternativeName>
    </domain>
    <domain>
        <recommendedName>
            <fullName evidence="1">Glucosamine-1-phosphate N-acetyltransferase</fullName>
            <ecNumber evidence="1">2.3.1.157</ecNumber>
        </recommendedName>
    </domain>
</protein>
<gene>
    <name evidence="1" type="primary">glmU</name>
    <name type="ordered locus">Sala_1370</name>
</gene>
<keyword id="KW-0012">Acyltransferase</keyword>
<keyword id="KW-0133">Cell shape</keyword>
<keyword id="KW-0961">Cell wall biogenesis/degradation</keyword>
<keyword id="KW-0963">Cytoplasm</keyword>
<keyword id="KW-0460">Magnesium</keyword>
<keyword id="KW-0479">Metal-binding</keyword>
<keyword id="KW-0511">Multifunctional enzyme</keyword>
<keyword id="KW-0548">Nucleotidyltransferase</keyword>
<keyword id="KW-0573">Peptidoglycan synthesis</keyword>
<keyword id="KW-1185">Reference proteome</keyword>
<keyword id="KW-0677">Repeat</keyword>
<keyword id="KW-0808">Transferase</keyword>
<proteinExistence type="inferred from homology"/>
<sequence length="451" mass="47370">MNNPIAAIVLAAGKGTRMKSDLHKVLHPIAGRPMLLHLMASVDELSPAKKVVVVGDKADQLEAALSGTAELAVQEPQLGTGHAVRQAEAALSGFDGDVLILYGDVPFVPAATMRAMLDRLGASDAPAVVVLAFEPADPLQYGRVITDGDRVVKMVEHKDATDAERAVRLCNSGLMAARARDLFALLARVTDDNAAKEFYLVDIVNIANADGRLCAVVKTDPADVGGINSRAELAAAEAQWQAFRREEAMAAGASLRAPETVWFSWDTQLGRDVTIEPNVVFGPGVKIADGATIRAFSHIEGATIGAGCEVGPFARLRPGTVLGEKAKIGNFVEVKKAVLGAGAKANHLTYLGDATVGAGANIGAGTITCNYDGYFKHQTQIGERAFIGSNSALVAPVKIGADAIVAAGSTVTLDVGDGELRIVRGEQLVKPGWADRFHDAMRKKKAAEQKK</sequence>
<organism>
    <name type="scientific">Sphingopyxis alaskensis (strain DSM 13593 / LMG 18877 / RB2256)</name>
    <name type="common">Sphingomonas alaskensis</name>
    <dbReference type="NCBI Taxonomy" id="317655"/>
    <lineage>
        <taxon>Bacteria</taxon>
        <taxon>Pseudomonadati</taxon>
        <taxon>Pseudomonadota</taxon>
        <taxon>Alphaproteobacteria</taxon>
        <taxon>Sphingomonadales</taxon>
        <taxon>Sphingomonadaceae</taxon>
        <taxon>Sphingopyxis</taxon>
    </lineage>
</organism>
<evidence type="ECO:0000255" key="1">
    <source>
        <dbReference type="HAMAP-Rule" id="MF_01631"/>
    </source>
</evidence>
<evidence type="ECO:0000305" key="2"/>
<comment type="function">
    <text evidence="1">Catalyzes the last two sequential reactions in the de novo biosynthetic pathway for UDP-N-acetylglucosamine (UDP-GlcNAc). The C-terminal domain catalyzes the transfer of acetyl group from acetyl coenzyme A to glucosamine-1-phosphate (GlcN-1-P) to produce N-acetylglucosamine-1-phosphate (GlcNAc-1-P), which is converted into UDP-GlcNAc by the transfer of uridine 5-monophosphate (from uridine 5-triphosphate), a reaction catalyzed by the N-terminal domain.</text>
</comment>
<comment type="catalytic activity">
    <reaction evidence="1">
        <text>alpha-D-glucosamine 1-phosphate + acetyl-CoA = N-acetyl-alpha-D-glucosamine 1-phosphate + CoA + H(+)</text>
        <dbReference type="Rhea" id="RHEA:13725"/>
        <dbReference type="ChEBI" id="CHEBI:15378"/>
        <dbReference type="ChEBI" id="CHEBI:57287"/>
        <dbReference type="ChEBI" id="CHEBI:57288"/>
        <dbReference type="ChEBI" id="CHEBI:57776"/>
        <dbReference type="ChEBI" id="CHEBI:58516"/>
        <dbReference type="EC" id="2.3.1.157"/>
    </reaction>
</comment>
<comment type="catalytic activity">
    <reaction evidence="1">
        <text>N-acetyl-alpha-D-glucosamine 1-phosphate + UTP + H(+) = UDP-N-acetyl-alpha-D-glucosamine + diphosphate</text>
        <dbReference type="Rhea" id="RHEA:13509"/>
        <dbReference type="ChEBI" id="CHEBI:15378"/>
        <dbReference type="ChEBI" id="CHEBI:33019"/>
        <dbReference type="ChEBI" id="CHEBI:46398"/>
        <dbReference type="ChEBI" id="CHEBI:57705"/>
        <dbReference type="ChEBI" id="CHEBI:57776"/>
        <dbReference type="EC" id="2.7.7.23"/>
    </reaction>
</comment>
<comment type="cofactor">
    <cofactor evidence="1">
        <name>Mg(2+)</name>
        <dbReference type="ChEBI" id="CHEBI:18420"/>
    </cofactor>
    <text evidence="1">Binds 1 Mg(2+) ion per subunit.</text>
</comment>
<comment type="pathway">
    <text evidence="1">Nucleotide-sugar biosynthesis; UDP-N-acetyl-alpha-D-glucosamine biosynthesis; N-acetyl-alpha-D-glucosamine 1-phosphate from alpha-D-glucosamine 6-phosphate (route II): step 2/2.</text>
</comment>
<comment type="pathway">
    <text evidence="1">Nucleotide-sugar biosynthesis; UDP-N-acetyl-alpha-D-glucosamine biosynthesis; UDP-N-acetyl-alpha-D-glucosamine from N-acetyl-alpha-D-glucosamine 1-phosphate: step 1/1.</text>
</comment>
<comment type="pathway">
    <text evidence="1">Bacterial outer membrane biogenesis; LPS lipid A biosynthesis.</text>
</comment>
<comment type="subunit">
    <text evidence="1">Homotrimer.</text>
</comment>
<comment type="subcellular location">
    <subcellularLocation>
        <location evidence="1">Cytoplasm</location>
    </subcellularLocation>
</comment>
<comment type="similarity">
    <text evidence="1">In the N-terminal section; belongs to the N-acetylglucosamine-1-phosphate uridyltransferase family.</text>
</comment>
<comment type="similarity">
    <text evidence="1">In the C-terminal section; belongs to the transferase hexapeptide repeat family.</text>
</comment>
<comment type="sequence caution" evidence="2">
    <conflict type="erroneous initiation">
        <sequence resource="EMBL-CDS" id="ABF53084"/>
    </conflict>
</comment>